<reference key="1">
    <citation type="journal article" date="2009" name="Stand. Genomic Sci.">
        <title>Complete genome sequence of Beutenbergia cavernae type strain (HKI 0122).</title>
        <authorList>
            <person name="Land M."/>
            <person name="Pukall R."/>
            <person name="Abt B."/>
            <person name="Goker M."/>
            <person name="Rohde M."/>
            <person name="Glavina Del Rio T."/>
            <person name="Tice H."/>
            <person name="Copeland A."/>
            <person name="Cheng J.F."/>
            <person name="Lucas S."/>
            <person name="Chen F."/>
            <person name="Nolan M."/>
            <person name="Bruce D."/>
            <person name="Goodwin L."/>
            <person name="Pitluck S."/>
            <person name="Ivanova N."/>
            <person name="Mavromatis K."/>
            <person name="Ovchinnikova G."/>
            <person name="Pati A."/>
            <person name="Chen A."/>
            <person name="Palaniappan K."/>
            <person name="Hauser L."/>
            <person name="Chang Y.J."/>
            <person name="Jefferies C.C."/>
            <person name="Saunders E."/>
            <person name="Brettin T."/>
            <person name="Detter J.C."/>
            <person name="Han C."/>
            <person name="Chain P."/>
            <person name="Bristow J."/>
            <person name="Eisen J.A."/>
            <person name="Markowitz V."/>
            <person name="Hugenholtz P."/>
            <person name="Kyrpides N.C."/>
            <person name="Klenk H.P."/>
            <person name="Lapidus A."/>
        </authorList>
    </citation>
    <scope>NUCLEOTIDE SEQUENCE [LARGE SCALE GENOMIC DNA]</scope>
    <source>
        <strain>ATCC BAA-8 / DSM 12333 / CCUG 43141 / JCM 11478 / NBRC 16432 / NCIMB 13614 / HKI 0122</strain>
    </source>
</reference>
<organism>
    <name type="scientific">Beutenbergia cavernae (strain ATCC BAA-8 / DSM 12333 / CCUG 43141 / JCM 11478 / NBRC 16432 / NCIMB 13614 / HKI 0122)</name>
    <dbReference type="NCBI Taxonomy" id="471853"/>
    <lineage>
        <taxon>Bacteria</taxon>
        <taxon>Bacillati</taxon>
        <taxon>Actinomycetota</taxon>
        <taxon>Actinomycetes</taxon>
        <taxon>Micrococcales</taxon>
        <taxon>Beutenbergiaceae</taxon>
        <taxon>Beutenbergia</taxon>
    </lineage>
</organism>
<gene>
    <name evidence="1" type="primary">rplX</name>
    <name type="ordered locus">Bcav_3132</name>
</gene>
<name>RL24_BEUC1</name>
<sequence>MAKIKKGDLVVVISGNRDDRGKQGRVLEVLTDSNRVVVEGVRRVKKHTKVSQTQRGSRTGGIETIEAPIHVSNVMLVDPETKKGTRVGYRTEEVERNGRARTVRVRVAKRSGKDV</sequence>
<keyword id="KW-1185">Reference proteome</keyword>
<keyword id="KW-0687">Ribonucleoprotein</keyword>
<keyword id="KW-0689">Ribosomal protein</keyword>
<keyword id="KW-0694">RNA-binding</keyword>
<keyword id="KW-0699">rRNA-binding</keyword>
<proteinExistence type="inferred from homology"/>
<evidence type="ECO:0000255" key="1">
    <source>
        <dbReference type="HAMAP-Rule" id="MF_01326"/>
    </source>
</evidence>
<evidence type="ECO:0000305" key="2"/>
<protein>
    <recommendedName>
        <fullName evidence="1">Large ribosomal subunit protein uL24</fullName>
    </recommendedName>
    <alternativeName>
        <fullName evidence="2">50S ribosomal protein L24</fullName>
    </alternativeName>
</protein>
<dbReference type="EMBL" id="CP001618">
    <property type="protein sequence ID" value="ACQ81376.1"/>
    <property type="molecule type" value="Genomic_DNA"/>
</dbReference>
<dbReference type="RefSeq" id="WP_015883616.1">
    <property type="nucleotide sequence ID" value="NC_012669.1"/>
</dbReference>
<dbReference type="SMR" id="C5C0I0"/>
<dbReference type="STRING" id="471853.Bcav_3132"/>
<dbReference type="KEGG" id="bcv:Bcav_3132"/>
<dbReference type="eggNOG" id="COG0198">
    <property type="taxonomic scope" value="Bacteria"/>
</dbReference>
<dbReference type="HOGENOM" id="CLU_093315_2_0_11"/>
<dbReference type="OrthoDB" id="9807419at2"/>
<dbReference type="Proteomes" id="UP000007962">
    <property type="component" value="Chromosome"/>
</dbReference>
<dbReference type="GO" id="GO:1990904">
    <property type="term" value="C:ribonucleoprotein complex"/>
    <property type="evidence" value="ECO:0007669"/>
    <property type="project" value="UniProtKB-KW"/>
</dbReference>
<dbReference type="GO" id="GO:0005840">
    <property type="term" value="C:ribosome"/>
    <property type="evidence" value="ECO:0007669"/>
    <property type="project" value="UniProtKB-KW"/>
</dbReference>
<dbReference type="GO" id="GO:0019843">
    <property type="term" value="F:rRNA binding"/>
    <property type="evidence" value="ECO:0007669"/>
    <property type="project" value="UniProtKB-UniRule"/>
</dbReference>
<dbReference type="GO" id="GO:0003735">
    <property type="term" value="F:structural constituent of ribosome"/>
    <property type="evidence" value="ECO:0007669"/>
    <property type="project" value="InterPro"/>
</dbReference>
<dbReference type="GO" id="GO:0006412">
    <property type="term" value="P:translation"/>
    <property type="evidence" value="ECO:0007669"/>
    <property type="project" value="UniProtKB-UniRule"/>
</dbReference>
<dbReference type="CDD" id="cd06089">
    <property type="entry name" value="KOW_RPL26"/>
    <property type="match status" value="1"/>
</dbReference>
<dbReference type="Gene3D" id="2.30.30.30">
    <property type="match status" value="1"/>
</dbReference>
<dbReference type="HAMAP" id="MF_01326_B">
    <property type="entry name" value="Ribosomal_uL24_B"/>
    <property type="match status" value="1"/>
</dbReference>
<dbReference type="InterPro" id="IPR014722">
    <property type="entry name" value="Rib_uL2_dom2"/>
</dbReference>
<dbReference type="InterPro" id="IPR003256">
    <property type="entry name" value="Ribosomal_uL24"/>
</dbReference>
<dbReference type="InterPro" id="IPR041988">
    <property type="entry name" value="Ribosomal_uL24_KOW"/>
</dbReference>
<dbReference type="InterPro" id="IPR008991">
    <property type="entry name" value="Translation_prot_SH3-like_sf"/>
</dbReference>
<dbReference type="NCBIfam" id="TIGR01079">
    <property type="entry name" value="rplX_bact"/>
    <property type="match status" value="1"/>
</dbReference>
<dbReference type="PANTHER" id="PTHR12903">
    <property type="entry name" value="MITOCHONDRIAL RIBOSOMAL PROTEIN L24"/>
    <property type="match status" value="1"/>
</dbReference>
<dbReference type="Pfam" id="PF17136">
    <property type="entry name" value="ribosomal_L24"/>
    <property type="match status" value="1"/>
</dbReference>
<dbReference type="SUPFAM" id="SSF50104">
    <property type="entry name" value="Translation proteins SH3-like domain"/>
    <property type="match status" value="1"/>
</dbReference>
<feature type="chain" id="PRO_1000214534" description="Large ribosomal subunit protein uL24">
    <location>
        <begin position="1"/>
        <end position="115"/>
    </location>
</feature>
<accession>C5C0I0</accession>
<comment type="function">
    <text evidence="1">One of two assembly initiator proteins, it binds directly to the 5'-end of the 23S rRNA, where it nucleates assembly of the 50S subunit.</text>
</comment>
<comment type="function">
    <text evidence="1">One of the proteins that surrounds the polypeptide exit tunnel on the outside of the subunit.</text>
</comment>
<comment type="subunit">
    <text evidence="1">Part of the 50S ribosomal subunit.</text>
</comment>
<comment type="similarity">
    <text evidence="1">Belongs to the universal ribosomal protein uL24 family.</text>
</comment>